<dbReference type="EMBL" id="CP002275">
    <property type="protein sequence ID" value="AFS12974.1"/>
    <property type="status" value="ALT_INIT"/>
    <property type="molecule type" value="Genomic_DNA"/>
</dbReference>
<dbReference type="RefSeq" id="WP_026071394.1">
    <property type="nucleotide sequence ID" value="NC_018612.1"/>
</dbReference>
<dbReference type="SMR" id="J9W7B2"/>
<dbReference type="KEGG" id="mid:MIP_01412"/>
<dbReference type="PATRIC" id="fig|1232724.3.peg.999"/>
<dbReference type="HOGENOM" id="CLU_131476_0_1_11"/>
<dbReference type="Proteomes" id="UP000007329">
    <property type="component" value="Chromosome"/>
</dbReference>
<dbReference type="GO" id="GO:0005886">
    <property type="term" value="C:plasma membrane"/>
    <property type="evidence" value="ECO:0007669"/>
    <property type="project" value="UniProtKB-SubCell"/>
</dbReference>
<dbReference type="InterPro" id="IPR008691">
    <property type="entry name" value="LpqH"/>
</dbReference>
<dbReference type="Pfam" id="PF05481">
    <property type="entry name" value="Myco_19_kDa"/>
    <property type="match status" value="1"/>
</dbReference>
<dbReference type="PROSITE" id="PS51257">
    <property type="entry name" value="PROKAR_LIPOPROTEIN"/>
    <property type="match status" value="1"/>
</dbReference>
<accession>J9W7B2</accession>
<reference key="1">
    <citation type="journal article" date="2007" name="PLoS ONE">
        <title>Molecular analysis of a leprosy immunotherapeutic bacillus provides insights into Mycobacterium evolution.</title>
        <authorList>
            <person name="Ahmed N."/>
            <person name="Saini V."/>
            <person name="Raghuvanshi S."/>
            <person name="Khurana J.P."/>
            <person name="Tyagi A.K."/>
            <person name="Tyagi A.K."/>
            <person name="Hasnain S.E."/>
        </authorList>
    </citation>
    <scope>NUCLEOTIDE SEQUENCE [LARGE SCALE GENOMIC DNA]</scope>
    <source>
        <strain>DSM 45239 / MTCC 9506</strain>
    </source>
</reference>
<reference key="2">
    <citation type="journal article" date="2012" name="Nucleic Acids Res.">
        <title>Massive gene acquisitions in Mycobacterium indicus pranii provide a perspective on mycobacterial evolution.</title>
        <authorList>
            <person name="Saini V."/>
            <person name="Raghuvanshi S."/>
            <person name="Khurana J.P."/>
            <person name="Ahmed N."/>
            <person name="Hasnain S.E."/>
            <person name="Tyagi A.K."/>
            <person name="Tyagi A.K."/>
        </authorList>
    </citation>
    <scope>NUCLEOTIDE SEQUENCE [LARGE SCALE GENOMIC DNA]</scope>
    <source>
        <strain>DSM 45239 / MTCC 9506</strain>
    </source>
</reference>
<evidence type="ECO:0000255" key="1">
    <source>
        <dbReference type="PROSITE-ProRule" id="PRU00303"/>
    </source>
</evidence>
<evidence type="ECO:0000305" key="2"/>
<organism>
    <name type="scientific">Mycobacterium indicus pranii (strain DSM 45239 / MTCC 9506)</name>
    <dbReference type="NCBI Taxonomy" id="1232724"/>
    <lineage>
        <taxon>Bacteria</taxon>
        <taxon>Bacillati</taxon>
        <taxon>Actinomycetota</taxon>
        <taxon>Actinomycetes</taxon>
        <taxon>Mycobacteriales</taxon>
        <taxon>Mycobacteriaceae</taxon>
        <taxon>Mycobacterium</taxon>
        <taxon>Mycobacterium avium complex (MAC)</taxon>
    </lineage>
</organism>
<protein>
    <recommendedName>
        <fullName evidence="2">Putative lipoprotein MIP_01412</fullName>
    </recommendedName>
</protein>
<sequence>MRNRTVAAGAVLTAALLGACTSHPPTHISSTASVTVNGHDRTFHIVKCGQVQWTRMIDIGSEFSGAKVVVDENAQPATTQSVRIRNVGGFSGMYSQGGDGNADMSMTGDKFTVSGTANGYQTDKPSEPAAATFKIVVTC</sequence>
<feature type="signal peptide" evidence="1">
    <location>
        <begin position="1"/>
        <end position="19"/>
    </location>
</feature>
<feature type="chain" id="PRO_0000434270" description="Putative lipoprotein MIP_01412" evidence="1">
    <location>
        <begin position="20"/>
        <end position="139"/>
    </location>
</feature>
<feature type="lipid moiety-binding region" description="N-palmitoyl cysteine" evidence="1">
    <location>
        <position position="20"/>
    </location>
</feature>
<feature type="lipid moiety-binding region" description="S-diacylglycerol cysteine" evidence="1">
    <location>
        <position position="20"/>
    </location>
</feature>
<keyword id="KW-1003">Cell membrane</keyword>
<keyword id="KW-0449">Lipoprotein</keyword>
<keyword id="KW-0472">Membrane</keyword>
<keyword id="KW-0564">Palmitate</keyword>
<keyword id="KW-0732">Signal</keyword>
<proteinExistence type="inferred from homology"/>
<name>LP412_MYCIP</name>
<comment type="subcellular location">
    <subcellularLocation>
        <location evidence="1">Cell membrane</location>
        <topology evidence="1">Lipid-anchor</topology>
    </subcellularLocation>
</comment>
<comment type="similarity">
    <text evidence="2">Belongs to the mycobacterial 19 kDa antigen family.</text>
</comment>
<comment type="sequence caution" evidence="2">
    <conflict type="erroneous initiation">
        <sequence resource="EMBL-CDS" id="AFS12974"/>
    </conflict>
    <text>Truncated N-terminus.</text>
</comment>
<gene>
    <name type="ORF">MIP_01412</name>
</gene>